<protein>
    <recommendedName>
        <fullName>Coatomer subunit zeta-2</fullName>
    </recommendedName>
    <alternativeName>
        <fullName>Zeta-2-coat protein</fullName>
        <shortName>Zeta-2 COP</shortName>
    </alternativeName>
</protein>
<accession>Q9P299</accession>
<feature type="chain" id="PRO_0000193831" description="Coatomer subunit zeta-2">
    <location>
        <begin position="1"/>
        <end position="210"/>
    </location>
</feature>
<feature type="region of interest" description="Disordered" evidence="3">
    <location>
        <begin position="1"/>
        <end position="34"/>
    </location>
</feature>
<feature type="compositionally biased region" description="Basic and acidic residues" evidence="3">
    <location>
        <begin position="1"/>
        <end position="12"/>
    </location>
</feature>
<feature type="compositionally biased region" description="Low complexity" evidence="3">
    <location>
        <begin position="13"/>
        <end position="34"/>
    </location>
</feature>
<name>COPZ2_HUMAN</name>
<evidence type="ECO:0000250" key="1"/>
<evidence type="ECO:0000250" key="2">
    <source>
        <dbReference type="UniProtKB" id="P53600"/>
    </source>
</evidence>
<evidence type="ECO:0000256" key="3">
    <source>
        <dbReference type="SAM" id="MobiDB-lite"/>
    </source>
</evidence>
<evidence type="ECO:0000305" key="4"/>
<sequence>MQRPEAWPRPHPGEGAAAAQAGGPAPPARAGEPSGLRLQEPSLYTIKAVFILDNDGRRLLAKYYDDTFPSMKEQMVFEKNVFNKTSRTESEIAFFGGMTIVYKNSIDLFLYVVGSSYENELMLMSVLTCLFESLNHMLRKNVEKRWLLENMDGAFLVLDEIVDGGVILESDPQQVIQKVNFRADDGGLTEQSVAQVLQSAKEQIKWSLLK</sequence>
<keyword id="KW-0963">Cytoplasm</keyword>
<keyword id="KW-0968">Cytoplasmic vesicle</keyword>
<keyword id="KW-0931">ER-Golgi transport</keyword>
<keyword id="KW-0333">Golgi apparatus</keyword>
<keyword id="KW-0472">Membrane</keyword>
<keyword id="KW-0653">Protein transport</keyword>
<keyword id="KW-1267">Proteomics identification</keyword>
<keyword id="KW-1185">Reference proteome</keyword>
<keyword id="KW-0813">Transport</keyword>
<reference key="1">
    <citation type="journal article" date="2000" name="J. Biochem.">
        <title>Identification and characterization of novel isoforms of COP I subunits.</title>
        <authorList>
            <person name="Futatsumori M."/>
            <person name="Kasai K."/>
            <person name="Takatsu H."/>
            <person name="Shin H.-W."/>
            <person name="Nakayama K."/>
        </authorList>
    </citation>
    <scope>NUCLEOTIDE SEQUENCE [MRNA]</scope>
</reference>
<reference key="2">
    <citation type="submission" date="2000-02" db="EMBL/GenBank/DDBJ databases">
        <title>Homo sapiens COPZ2 gene encoding nonclathrin coat protein zeta-COP.</title>
        <authorList>
            <person name="Hahn Y."/>
            <person name="Chung J.H."/>
        </authorList>
    </citation>
    <scope>NUCLEOTIDE SEQUENCE [MRNA]</scope>
</reference>
<reference key="3">
    <citation type="journal article" date="2004" name="Genome Res.">
        <title>The status, quality, and expansion of the NIH full-length cDNA project: the Mammalian Gene Collection (MGC).</title>
        <authorList>
            <consortium name="The MGC Project Team"/>
        </authorList>
    </citation>
    <scope>NUCLEOTIDE SEQUENCE [LARGE SCALE MRNA]</scope>
    <source>
        <tissue>B-cell</tissue>
    </source>
</reference>
<organism>
    <name type="scientific">Homo sapiens</name>
    <name type="common">Human</name>
    <dbReference type="NCBI Taxonomy" id="9606"/>
    <lineage>
        <taxon>Eukaryota</taxon>
        <taxon>Metazoa</taxon>
        <taxon>Chordata</taxon>
        <taxon>Craniata</taxon>
        <taxon>Vertebrata</taxon>
        <taxon>Euteleostomi</taxon>
        <taxon>Mammalia</taxon>
        <taxon>Eutheria</taxon>
        <taxon>Euarchontoglires</taxon>
        <taxon>Primates</taxon>
        <taxon>Haplorrhini</taxon>
        <taxon>Catarrhini</taxon>
        <taxon>Hominidae</taxon>
        <taxon>Homo</taxon>
    </lineage>
</organism>
<gene>
    <name type="primary">COPZ2</name>
</gene>
<dbReference type="EMBL" id="AB047849">
    <property type="protein sequence ID" value="BAB17660.1"/>
    <property type="molecule type" value="mRNA"/>
</dbReference>
<dbReference type="EMBL" id="AB037938">
    <property type="protein sequence ID" value="BAA90670.1"/>
    <property type="molecule type" value="mRNA"/>
</dbReference>
<dbReference type="EMBL" id="BC015924">
    <property type="protein sequence ID" value="AAH15924.1"/>
    <property type="molecule type" value="mRNA"/>
</dbReference>
<dbReference type="CCDS" id="CCDS74092.1"/>
<dbReference type="RefSeq" id="NP_057513.1">
    <property type="nucleotide sequence ID" value="NM_016429.4"/>
</dbReference>
<dbReference type="SMR" id="Q9P299"/>
<dbReference type="BioGRID" id="119390">
    <property type="interactions" value="16"/>
</dbReference>
<dbReference type="ComplexPortal" id="CPX-7970">
    <property type="entry name" value="COPI vesicle coat complex, COPG1-COPZ2 variant"/>
</dbReference>
<dbReference type="FunCoup" id="Q9P299">
    <property type="interactions" value="936"/>
</dbReference>
<dbReference type="IntAct" id="Q9P299">
    <property type="interactions" value="12"/>
</dbReference>
<dbReference type="STRING" id="9606.ENSP00000480707"/>
<dbReference type="iPTMnet" id="Q9P299"/>
<dbReference type="PhosphoSitePlus" id="Q9P299"/>
<dbReference type="BioMuta" id="COPZ2"/>
<dbReference type="DMDM" id="20532038"/>
<dbReference type="jPOST" id="Q9P299"/>
<dbReference type="MassIVE" id="Q9P299"/>
<dbReference type="PaxDb" id="9606-ENSP00000480707"/>
<dbReference type="PeptideAtlas" id="Q9P299"/>
<dbReference type="ProteomicsDB" id="83762"/>
<dbReference type="Pumba" id="Q9P299"/>
<dbReference type="Antibodypedia" id="53378">
    <property type="antibodies" value="60 antibodies from 15 providers"/>
</dbReference>
<dbReference type="DNASU" id="51226"/>
<dbReference type="Ensembl" id="ENST00000621465.5">
    <property type="protein sequence ID" value="ENSP00000480707.1"/>
    <property type="gene ID" value="ENSG00000005243.10"/>
</dbReference>
<dbReference type="GeneID" id="51226"/>
<dbReference type="KEGG" id="hsa:51226"/>
<dbReference type="MANE-Select" id="ENST00000621465.5">
    <property type="protein sequence ID" value="ENSP00000480707.1"/>
    <property type="RefSeq nucleotide sequence ID" value="NM_016429.4"/>
    <property type="RefSeq protein sequence ID" value="NP_057513.1"/>
</dbReference>
<dbReference type="UCSC" id="uc032flu.2">
    <property type="organism name" value="human"/>
</dbReference>
<dbReference type="AGR" id="HGNC:19356"/>
<dbReference type="CTD" id="51226"/>
<dbReference type="DisGeNET" id="51226"/>
<dbReference type="GeneCards" id="COPZ2"/>
<dbReference type="HGNC" id="HGNC:19356">
    <property type="gene designation" value="COPZ2"/>
</dbReference>
<dbReference type="HPA" id="ENSG00000005243">
    <property type="expression patterns" value="Low tissue specificity"/>
</dbReference>
<dbReference type="MIM" id="615526">
    <property type="type" value="gene"/>
</dbReference>
<dbReference type="neXtProt" id="NX_Q9P299"/>
<dbReference type="OpenTargets" id="ENSG00000005243"/>
<dbReference type="PharmGKB" id="PA134862698"/>
<dbReference type="VEuPathDB" id="HostDB:ENSG00000005243"/>
<dbReference type="eggNOG" id="KOG3343">
    <property type="taxonomic scope" value="Eukaryota"/>
</dbReference>
<dbReference type="GeneTree" id="ENSGT00390000004405"/>
<dbReference type="HOGENOM" id="CLU_086803_2_0_1"/>
<dbReference type="InParanoid" id="Q9P299"/>
<dbReference type="OMA" id="MNCLFES"/>
<dbReference type="OrthoDB" id="10249988at2759"/>
<dbReference type="PAN-GO" id="Q9P299">
    <property type="GO annotations" value="4 GO annotations based on evolutionary models"/>
</dbReference>
<dbReference type="PhylomeDB" id="Q9P299"/>
<dbReference type="TreeFam" id="TF300262"/>
<dbReference type="PathwayCommons" id="Q9P299"/>
<dbReference type="Reactome" id="R-HSA-6807878">
    <property type="pathway name" value="COPI-mediated anterograde transport"/>
</dbReference>
<dbReference type="Reactome" id="R-HSA-6811434">
    <property type="pathway name" value="COPI-dependent Golgi-to-ER retrograde traffic"/>
</dbReference>
<dbReference type="SignaLink" id="Q9P299"/>
<dbReference type="BioGRID-ORCS" id="51226">
    <property type="hits" value="6 hits in 310 CRISPR screens"/>
</dbReference>
<dbReference type="CD-CODE" id="91857CE7">
    <property type="entry name" value="Nucleolus"/>
</dbReference>
<dbReference type="GenomeRNAi" id="51226"/>
<dbReference type="Pharos" id="Q9P299">
    <property type="development level" value="Tbio"/>
</dbReference>
<dbReference type="PRO" id="PR:Q9P299"/>
<dbReference type="Proteomes" id="UP000005640">
    <property type="component" value="Chromosome 17"/>
</dbReference>
<dbReference type="RNAct" id="Q9P299">
    <property type="molecule type" value="protein"/>
</dbReference>
<dbReference type="Bgee" id="ENSG00000005243">
    <property type="expression patterns" value="Expressed in tendon of biceps brachii and 177 other cell types or tissues"/>
</dbReference>
<dbReference type="ExpressionAtlas" id="Q9P299">
    <property type="expression patterns" value="baseline and differential"/>
</dbReference>
<dbReference type="GO" id="GO:0005801">
    <property type="term" value="C:cis-Golgi network"/>
    <property type="evidence" value="ECO:0000303"/>
    <property type="project" value="UniProtKB"/>
</dbReference>
<dbReference type="GO" id="GO:0030126">
    <property type="term" value="C:COPI vesicle coat"/>
    <property type="evidence" value="ECO:0000314"/>
    <property type="project" value="MGI"/>
</dbReference>
<dbReference type="GO" id="GO:0005829">
    <property type="term" value="C:cytosol"/>
    <property type="evidence" value="ECO:0000304"/>
    <property type="project" value="Reactome"/>
</dbReference>
<dbReference type="GO" id="GO:0005789">
    <property type="term" value="C:endoplasmic reticulum membrane"/>
    <property type="evidence" value="ECO:0000304"/>
    <property type="project" value="Reactome"/>
</dbReference>
<dbReference type="GO" id="GO:0033116">
    <property type="term" value="C:endoplasmic reticulum-Golgi intermediate compartment membrane"/>
    <property type="evidence" value="ECO:0007669"/>
    <property type="project" value="UniProtKB-SubCell"/>
</dbReference>
<dbReference type="GO" id="GO:0000139">
    <property type="term" value="C:Golgi membrane"/>
    <property type="evidence" value="ECO:0000304"/>
    <property type="project" value="Reactome"/>
</dbReference>
<dbReference type="GO" id="GO:0030133">
    <property type="term" value="C:transport vesicle"/>
    <property type="evidence" value="ECO:0000304"/>
    <property type="project" value="Reactome"/>
</dbReference>
<dbReference type="GO" id="GO:0006891">
    <property type="term" value="P:intra-Golgi vesicle-mediated transport"/>
    <property type="evidence" value="ECO:0000318"/>
    <property type="project" value="GO_Central"/>
</dbReference>
<dbReference type="GO" id="GO:0006886">
    <property type="term" value="P:intracellular protein transport"/>
    <property type="evidence" value="ECO:0000318"/>
    <property type="project" value="GO_Central"/>
</dbReference>
<dbReference type="GO" id="GO:0006890">
    <property type="term" value="P:retrograde vesicle-mediated transport, Golgi to endoplasmic reticulum"/>
    <property type="evidence" value="ECO:0000318"/>
    <property type="project" value="GO_Central"/>
</dbReference>
<dbReference type="CDD" id="cd14829">
    <property type="entry name" value="Zeta-COP"/>
    <property type="match status" value="1"/>
</dbReference>
<dbReference type="FunFam" id="3.30.450.60:FF:000008">
    <property type="entry name" value="Coatomer subunit zeta-1 isoform 1"/>
    <property type="match status" value="1"/>
</dbReference>
<dbReference type="Gene3D" id="3.30.450.60">
    <property type="match status" value="1"/>
</dbReference>
<dbReference type="InterPro" id="IPR022775">
    <property type="entry name" value="AP_mu_sigma_su"/>
</dbReference>
<dbReference type="InterPro" id="IPR039652">
    <property type="entry name" value="Coatomer_zeta"/>
</dbReference>
<dbReference type="InterPro" id="IPR011012">
    <property type="entry name" value="Longin-like_dom_sf"/>
</dbReference>
<dbReference type="PANTHER" id="PTHR11043:SF4">
    <property type="entry name" value="COATOMER SUBUNIT ZETA-2"/>
    <property type="match status" value="1"/>
</dbReference>
<dbReference type="PANTHER" id="PTHR11043">
    <property type="entry name" value="ZETA-COAT PROTEIN"/>
    <property type="match status" value="1"/>
</dbReference>
<dbReference type="Pfam" id="PF01217">
    <property type="entry name" value="Clat_adaptor_s"/>
    <property type="match status" value="1"/>
</dbReference>
<dbReference type="SUPFAM" id="SSF64356">
    <property type="entry name" value="SNARE-like"/>
    <property type="match status" value="1"/>
</dbReference>
<comment type="function">
    <text evidence="2">The coatomer is a cytosolic protein complex that binds to dilysine motifs and reversibly associates with Golgi non-clathrin-coated vesicles, which further mediate biosynthetic protein transport from the ER, via the Golgi up to the trans Golgi network. Coatomer complex is required for budding from Golgi membranes, and is essential for the retrograde Golgi-to-ER transport of dilysine-tagged proteins. The zeta subunit may be involved in regulating the coat assembly and, hence, the rate of biosynthetic protein transport due to its association-dissociation properties with the coatomer complex.</text>
</comment>
<comment type="subunit">
    <text>Oligomeric complex.</text>
</comment>
<comment type="subcellular location">
    <subcellularLocation>
        <location evidence="1">Cytoplasm</location>
    </subcellularLocation>
    <subcellularLocation>
        <location evidence="1">Endoplasmic reticulum-Golgi intermediate compartment membrane</location>
        <topology evidence="1">Peripheral membrane protein</topology>
        <orientation evidence="1">Cytoplasmic side</orientation>
    </subcellularLocation>
    <subcellularLocation>
        <location evidence="1">Golgi apparatus membrane</location>
        <topology evidence="1">Peripheral membrane protein</topology>
        <orientation evidence="1">Cytoplasmic side</orientation>
    </subcellularLocation>
    <subcellularLocation>
        <location evidence="1">Cytoplasmic vesicle</location>
        <location evidence="1">COPI-coated vesicle membrane</location>
        <topology evidence="1">Peripheral membrane protein</topology>
        <orientation evidence="1">Cytoplasmic side</orientation>
    </subcellularLocation>
    <text evidence="1">The coatomer is cytoplasmic or polymerized on the cytoplasmic side of the Golgi, as well as on the vesicles/buds originating from it. Shows a significant preference for ERGIC and cis-Golgi apparatus compared with trans-Golgi network.</text>
</comment>
<comment type="similarity">
    <text evidence="4">Belongs to the adaptor complexes small subunit family.</text>
</comment>
<proteinExistence type="evidence at protein level"/>